<organism>
    <name type="scientific">Schizosaccharomyces pombe (strain 972 / ATCC 24843)</name>
    <name type="common">Fission yeast</name>
    <dbReference type="NCBI Taxonomy" id="284812"/>
    <lineage>
        <taxon>Eukaryota</taxon>
        <taxon>Fungi</taxon>
        <taxon>Dikarya</taxon>
        <taxon>Ascomycota</taxon>
        <taxon>Taphrinomycotina</taxon>
        <taxon>Schizosaccharomycetes</taxon>
        <taxon>Schizosaccharomycetales</taxon>
        <taxon>Schizosaccharomycetaceae</taxon>
        <taxon>Schizosaccharomyces</taxon>
    </lineage>
</organism>
<evidence type="ECO:0000255" key="1"/>
<evidence type="ECO:0000305" key="2"/>
<proteinExistence type="inferred from homology"/>
<sequence length="287" mass="31302">MKNPIKWAIIAVLLSTVVAKKIVGEGMADVSAIKHPEEVHPTNRDFLRSLIFSISMIFGCEIGDKTFIVAALLAFENSRLTVFAGSYSALFIMTLLGVLLGHAAPLLFPRKLTDILGGVLFVIFGIKMLMEAKEVMDSKESMSDEFQNVRNEIAANGPIDQLLEEGAAPSHYTGHRSRSGHTLMSQLKSKGRNVMATLFSPLFIKAFALTFVSEWGDRSQIATIAMAASDNVYGVFMGANVGHACCTALAVISGKYISTKIKVHKVMFIGGILFIAFGLVYFYQGFF</sequence>
<reference key="1">
    <citation type="journal article" date="2002" name="Nature">
        <title>The genome sequence of Schizosaccharomyces pombe.</title>
        <authorList>
            <person name="Wood V."/>
            <person name="Gwilliam R."/>
            <person name="Rajandream M.A."/>
            <person name="Lyne M.H."/>
            <person name="Lyne R."/>
            <person name="Stewart A."/>
            <person name="Sgouros J.G."/>
            <person name="Peat N."/>
            <person name="Hayles J."/>
            <person name="Baker S.G."/>
            <person name="Basham D."/>
            <person name="Bowman S."/>
            <person name="Brooks K."/>
            <person name="Brown D."/>
            <person name="Brown S."/>
            <person name="Chillingworth T."/>
            <person name="Churcher C.M."/>
            <person name="Collins M."/>
            <person name="Connor R."/>
            <person name="Cronin A."/>
            <person name="Davis P."/>
            <person name="Feltwell T."/>
            <person name="Fraser A."/>
            <person name="Gentles S."/>
            <person name="Goble A."/>
            <person name="Hamlin N."/>
            <person name="Harris D.E."/>
            <person name="Hidalgo J."/>
            <person name="Hodgson G."/>
            <person name="Holroyd S."/>
            <person name="Hornsby T."/>
            <person name="Howarth S."/>
            <person name="Huckle E.J."/>
            <person name="Hunt S."/>
            <person name="Jagels K."/>
            <person name="James K.D."/>
            <person name="Jones L."/>
            <person name="Jones M."/>
            <person name="Leather S."/>
            <person name="McDonald S."/>
            <person name="McLean J."/>
            <person name="Mooney P."/>
            <person name="Moule S."/>
            <person name="Mungall K.L."/>
            <person name="Murphy L.D."/>
            <person name="Niblett D."/>
            <person name="Odell C."/>
            <person name="Oliver K."/>
            <person name="O'Neil S."/>
            <person name="Pearson D."/>
            <person name="Quail M.A."/>
            <person name="Rabbinowitsch E."/>
            <person name="Rutherford K.M."/>
            <person name="Rutter S."/>
            <person name="Saunders D."/>
            <person name="Seeger K."/>
            <person name="Sharp S."/>
            <person name="Skelton J."/>
            <person name="Simmonds M.N."/>
            <person name="Squares R."/>
            <person name="Squares S."/>
            <person name="Stevens K."/>
            <person name="Taylor K."/>
            <person name="Taylor R.G."/>
            <person name="Tivey A."/>
            <person name="Walsh S.V."/>
            <person name="Warren T."/>
            <person name="Whitehead S."/>
            <person name="Woodward J.R."/>
            <person name="Volckaert G."/>
            <person name="Aert R."/>
            <person name="Robben J."/>
            <person name="Grymonprez B."/>
            <person name="Weltjens I."/>
            <person name="Vanstreels E."/>
            <person name="Rieger M."/>
            <person name="Schaefer M."/>
            <person name="Mueller-Auer S."/>
            <person name="Gabel C."/>
            <person name="Fuchs M."/>
            <person name="Duesterhoeft A."/>
            <person name="Fritzc C."/>
            <person name="Holzer E."/>
            <person name="Moestl D."/>
            <person name="Hilbert H."/>
            <person name="Borzym K."/>
            <person name="Langer I."/>
            <person name="Beck A."/>
            <person name="Lehrach H."/>
            <person name="Reinhardt R."/>
            <person name="Pohl T.M."/>
            <person name="Eger P."/>
            <person name="Zimmermann W."/>
            <person name="Wedler H."/>
            <person name="Wambutt R."/>
            <person name="Purnelle B."/>
            <person name="Goffeau A."/>
            <person name="Cadieu E."/>
            <person name="Dreano S."/>
            <person name="Gloux S."/>
            <person name="Lelaure V."/>
            <person name="Mottier S."/>
            <person name="Galibert F."/>
            <person name="Aves S.J."/>
            <person name="Xiang Z."/>
            <person name="Hunt C."/>
            <person name="Moore K."/>
            <person name="Hurst S.M."/>
            <person name="Lucas M."/>
            <person name="Rochet M."/>
            <person name="Gaillardin C."/>
            <person name="Tallada V.A."/>
            <person name="Garzon A."/>
            <person name="Thode G."/>
            <person name="Daga R.R."/>
            <person name="Cruzado L."/>
            <person name="Jimenez J."/>
            <person name="Sanchez M."/>
            <person name="del Rey F."/>
            <person name="Benito J."/>
            <person name="Dominguez A."/>
            <person name="Revuelta J.L."/>
            <person name="Moreno S."/>
            <person name="Armstrong J."/>
            <person name="Forsburg S.L."/>
            <person name="Cerutti L."/>
            <person name="Lowe T."/>
            <person name="McCombie W.R."/>
            <person name="Paulsen I."/>
            <person name="Potashkin J."/>
            <person name="Shpakovski G.V."/>
            <person name="Ussery D."/>
            <person name="Barrell B.G."/>
            <person name="Nurse P."/>
        </authorList>
    </citation>
    <scope>NUCLEOTIDE SEQUENCE [LARGE SCALE GENOMIC DNA]</scope>
    <source>
        <strain>972 / ATCC 24843</strain>
    </source>
</reference>
<name>YD68_SCHPO</name>
<dbReference type="EMBL" id="CU329670">
    <property type="protein sequence ID" value="CAA93691.1"/>
    <property type="molecule type" value="Genomic_DNA"/>
</dbReference>
<dbReference type="PIR" id="T37860">
    <property type="entry name" value="T37860"/>
</dbReference>
<dbReference type="BioGRID" id="278683">
    <property type="interactions" value="11"/>
</dbReference>
<dbReference type="FunCoup" id="Q10320">
    <property type="interactions" value="491"/>
</dbReference>
<dbReference type="TCDB" id="2.A.106.2.4">
    <property type="family name" value="the ca(2+):h(+) antiporter-2 (caca2) family"/>
</dbReference>
<dbReference type="iPTMnet" id="Q10320"/>
<dbReference type="PaxDb" id="4896-SPAC17G8.08c.1"/>
<dbReference type="EnsemblFungi" id="SPAC17G8.08c.1">
    <property type="protein sequence ID" value="SPAC17G8.08c.1:pep"/>
    <property type="gene ID" value="SPAC17G8.08c"/>
</dbReference>
<dbReference type="KEGG" id="spo:2542208"/>
<dbReference type="PomBase" id="SPAC17G8.08c"/>
<dbReference type="VEuPathDB" id="FungiDB:SPAC17G8.08c"/>
<dbReference type="eggNOG" id="KOG2881">
    <property type="taxonomic scope" value="Eukaryota"/>
</dbReference>
<dbReference type="HOGENOM" id="CLU_040186_0_0_1"/>
<dbReference type="InParanoid" id="Q10320"/>
<dbReference type="OMA" id="ILGHAIC"/>
<dbReference type="PhylomeDB" id="Q10320"/>
<dbReference type="PRO" id="PR:Q10320"/>
<dbReference type="Proteomes" id="UP000002485">
    <property type="component" value="Chromosome I"/>
</dbReference>
<dbReference type="GO" id="GO:0005783">
    <property type="term" value="C:endoplasmic reticulum"/>
    <property type="evidence" value="ECO:0007005"/>
    <property type="project" value="PomBase"/>
</dbReference>
<dbReference type="GO" id="GO:0005794">
    <property type="term" value="C:Golgi apparatus"/>
    <property type="evidence" value="ECO:0007005"/>
    <property type="project" value="PomBase"/>
</dbReference>
<dbReference type="GO" id="GO:0016020">
    <property type="term" value="C:membrane"/>
    <property type="evidence" value="ECO:0007669"/>
    <property type="project" value="UniProtKB-SubCell"/>
</dbReference>
<dbReference type="GO" id="GO:0015085">
    <property type="term" value="F:calcium ion transmembrane transporter activity"/>
    <property type="evidence" value="ECO:0000318"/>
    <property type="project" value="GO_Central"/>
</dbReference>
<dbReference type="GO" id="GO:0015369">
    <property type="term" value="F:calcium:proton antiporter activity"/>
    <property type="evidence" value="ECO:0000304"/>
    <property type="project" value="PomBase"/>
</dbReference>
<dbReference type="GO" id="GO:0005384">
    <property type="term" value="F:manganese ion transmembrane transporter activity"/>
    <property type="evidence" value="ECO:0000318"/>
    <property type="project" value="GO_Central"/>
</dbReference>
<dbReference type="GO" id="GO:0070588">
    <property type="term" value="P:calcium ion transmembrane transport"/>
    <property type="evidence" value="ECO:0000318"/>
    <property type="project" value="GO_Central"/>
</dbReference>
<dbReference type="GO" id="GO:0032468">
    <property type="term" value="P:Golgi calcium ion homeostasis"/>
    <property type="evidence" value="ECO:0000318"/>
    <property type="project" value="GO_Central"/>
</dbReference>
<dbReference type="GO" id="GO:0032472">
    <property type="term" value="P:Golgi calcium ion transport"/>
    <property type="evidence" value="ECO:0000318"/>
    <property type="project" value="GO_Central"/>
</dbReference>
<dbReference type="GO" id="GO:0071421">
    <property type="term" value="P:manganese ion transmembrane transport"/>
    <property type="evidence" value="ECO:0000318"/>
    <property type="project" value="GO_Central"/>
</dbReference>
<dbReference type="GO" id="GO:1902600">
    <property type="term" value="P:proton transmembrane transport"/>
    <property type="evidence" value="ECO:0000304"/>
    <property type="project" value="PomBase"/>
</dbReference>
<dbReference type="InterPro" id="IPR001727">
    <property type="entry name" value="GDT1-like"/>
</dbReference>
<dbReference type="InterPro" id="IPR049555">
    <property type="entry name" value="GDT1-like_CS"/>
</dbReference>
<dbReference type="PANTHER" id="PTHR12608:SF1">
    <property type="entry name" value="TRANSMEMBRANE PROTEIN 165"/>
    <property type="match status" value="1"/>
</dbReference>
<dbReference type="PANTHER" id="PTHR12608">
    <property type="entry name" value="TRANSMEMBRANE PROTEIN HTP-1 RELATED"/>
    <property type="match status" value="1"/>
</dbReference>
<dbReference type="Pfam" id="PF01169">
    <property type="entry name" value="GDT1"/>
    <property type="match status" value="2"/>
</dbReference>
<dbReference type="PROSITE" id="PS01214">
    <property type="entry name" value="UPF0016"/>
    <property type="match status" value="1"/>
</dbReference>
<keyword id="KW-0472">Membrane</keyword>
<keyword id="KW-1185">Reference proteome</keyword>
<keyword id="KW-0812">Transmembrane</keyword>
<keyword id="KW-1133">Transmembrane helix</keyword>
<protein>
    <recommendedName>
        <fullName>GDT1-like protein C17G8.08c</fullName>
    </recommendedName>
</protein>
<gene>
    <name type="ORF">SPAC17G8.08c</name>
</gene>
<feature type="chain" id="PRO_0000212468" description="GDT1-like protein C17G8.08c">
    <location>
        <begin position="1"/>
        <end position="287"/>
    </location>
</feature>
<feature type="transmembrane region" description="Helical" evidence="1">
    <location>
        <begin position="7"/>
        <end position="27"/>
    </location>
</feature>
<feature type="transmembrane region" description="Helical" evidence="1">
    <location>
        <begin position="50"/>
        <end position="70"/>
    </location>
</feature>
<feature type="transmembrane region" description="Helical" evidence="1">
    <location>
        <begin position="89"/>
        <end position="109"/>
    </location>
</feature>
<feature type="transmembrane region" description="Helical" evidence="1">
    <location>
        <begin position="112"/>
        <end position="132"/>
    </location>
</feature>
<feature type="transmembrane region" description="Helical" evidence="1">
    <location>
        <begin position="194"/>
        <end position="214"/>
    </location>
</feature>
<feature type="transmembrane region" description="Helical" evidence="1">
    <location>
        <begin position="232"/>
        <end position="252"/>
    </location>
</feature>
<feature type="transmembrane region" description="Helical" evidence="1">
    <location>
        <begin position="267"/>
        <end position="287"/>
    </location>
</feature>
<comment type="subcellular location">
    <subcellularLocation>
        <location evidence="2">Membrane</location>
        <topology evidence="2">Multi-pass membrane protein</topology>
    </subcellularLocation>
</comment>
<comment type="similarity">
    <text evidence="2">Belongs to the GDT1 family.</text>
</comment>
<accession>Q10320</accession>